<evidence type="ECO:0000255" key="1"/>
<evidence type="ECO:0000255" key="2">
    <source>
        <dbReference type="PROSITE-ProRule" id="PRU00836"/>
    </source>
</evidence>
<evidence type="ECO:0000269" key="3">
    <source>
    </source>
</evidence>
<evidence type="ECO:0000269" key="4">
    <source>
    </source>
</evidence>
<evidence type="ECO:0000269" key="5">
    <source>
    </source>
</evidence>
<evidence type="ECO:0000269" key="6">
    <source>
    </source>
</evidence>
<evidence type="ECO:0000269" key="7">
    <source>
    </source>
</evidence>
<evidence type="ECO:0000269" key="8">
    <source>
    </source>
</evidence>
<evidence type="ECO:0000269" key="9">
    <source>
    </source>
</evidence>
<evidence type="ECO:0000269" key="10">
    <source>
    </source>
</evidence>
<evidence type="ECO:0000269" key="11">
    <source>
    </source>
</evidence>
<evidence type="ECO:0000269" key="12">
    <source>
    </source>
</evidence>
<evidence type="ECO:0000269" key="13">
    <source>
    </source>
</evidence>
<evidence type="ECO:0000305" key="14"/>
<evidence type="ECO:0000305" key="15">
    <source>
    </source>
</evidence>
<evidence type="ECO:0007829" key="16">
    <source>
        <dbReference type="PDB" id="5NF8"/>
    </source>
</evidence>
<comment type="function">
    <text evidence="8 9 10 12 13">Assembly factor that plays a role in the assembly of the respiratory chain supercomplexes (SCs) composed of ubiquinol-cytochrome c oxidoreductase (cytochrome b-c1 complex, complex III, CIII) and cytochrome c oxidase (complex IV, CIV). Involved in the recruitment of COX13 and RCF2 into cytochrome c oxidase. May also be required for late-stage assembly of the COX12 and COX13 subunits (PubMed:22310663, PubMed:22342701, PubMed:22405070). Required for the generation and maintenance of a normal proton motive force (PMF) across the inner mitochondrial membrane (IMM) by preventing proton leakage through an inactive population of CIV that accumulates when RCF1 and/or RCF2 proteins are absent (PubMed:30683696, PubMed:31591265).</text>
</comment>
<comment type="subunit">
    <text evidence="7 8 9 10">Associates with a subpopulation of the cytochrome bc1-cytochrome c oxidase supercomplexes (PubMed:19750512, PubMed:22310663, PubMed:22342701, PubMed:22405070). Associates in substoichiometric amounts with complex IV (PubMed:22310663). Interacts with COX3 (PubMed:22310663).</text>
</comment>
<comment type="subcellular location">
    <subcellularLocation>
        <location evidence="2 3 5">Mitochondrion membrane</location>
        <topology evidence="2 3 5">Multi-pass membrane protein</topology>
    </subcellularLocation>
</comment>
<comment type="disruption phenotype">
    <text evidence="6 9">Increases frequency of mitochondrial genome loss. Promotes reactive oxygen species (ROS) generation.</text>
</comment>
<comment type="miscellaneous">
    <text evidence="4">Present with 1210 molecules/cell in log phase SD medium.</text>
</comment>
<comment type="similarity">
    <text evidence="14">Belongs to the AIM31 family.</text>
</comment>
<dbReference type="EMBL" id="Z46659">
    <property type="protein sequence ID" value="CAA86625.1"/>
    <property type="molecule type" value="Genomic_DNA"/>
</dbReference>
<dbReference type="EMBL" id="AY558234">
    <property type="protein sequence ID" value="AAS56560.1"/>
    <property type="molecule type" value="Genomic_DNA"/>
</dbReference>
<dbReference type="EMBL" id="BK006946">
    <property type="protein sequence ID" value="DAA09868.1"/>
    <property type="molecule type" value="Genomic_DNA"/>
</dbReference>
<dbReference type="PIR" id="S49749">
    <property type="entry name" value="S49749"/>
</dbReference>
<dbReference type="RefSeq" id="NP_013682.1">
    <property type="nucleotide sequence ID" value="NM_001182388.1"/>
</dbReference>
<dbReference type="PDB" id="5NF8">
    <property type="method" value="NMR"/>
    <property type="chains" value="A/B=1-159"/>
</dbReference>
<dbReference type="PDBsum" id="5NF8"/>
<dbReference type="SMR" id="Q03713"/>
<dbReference type="BioGRID" id="35139">
    <property type="interactions" value="337"/>
</dbReference>
<dbReference type="DIP" id="DIP-6835N"/>
<dbReference type="FunCoup" id="Q03713">
    <property type="interactions" value="127"/>
</dbReference>
<dbReference type="IntAct" id="Q03713">
    <property type="interactions" value="2"/>
</dbReference>
<dbReference type="STRING" id="4932.YML030W"/>
<dbReference type="TCDB" id="8.A.112.1.1">
    <property type="family name" value="the respiratory supercomplex factor (rcf) family"/>
</dbReference>
<dbReference type="PaxDb" id="4932-YML030W"/>
<dbReference type="PeptideAtlas" id="Q03713"/>
<dbReference type="EnsemblFungi" id="YML030W_mRNA">
    <property type="protein sequence ID" value="YML030W"/>
    <property type="gene ID" value="YML030W"/>
</dbReference>
<dbReference type="GeneID" id="854978"/>
<dbReference type="KEGG" id="sce:YML030W"/>
<dbReference type="AGR" id="SGD:S000004492"/>
<dbReference type="SGD" id="S000004492">
    <property type="gene designation" value="RCF1"/>
</dbReference>
<dbReference type="VEuPathDB" id="FungiDB:YML030W"/>
<dbReference type="eggNOG" id="KOG4431">
    <property type="taxonomic scope" value="Eukaryota"/>
</dbReference>
<dbReference type="GeneTree" id="ENSGT00940000171730"/>
<dbReference type="HOGENOM" id="CLU_087356_1_0_1"/>
<dbReference type="InParanoid" id="Q03713"/>
<dbReference type="OMA" id="QRWIREL"/>
<dbReference type="OrthoDB" id="6604018at2759"/>
<dbReference type="BioCyc" id="YEAST:G3O-32631-MONOMER"/>
<dbReference type="BioGRID-ORCS" id="854978">
    <property type="hits" value="6 hits in 10 CRISPR screens"/>
</dbReference>
<dbReference type="PRO" id="PR:Q03713"/>
<dbReference type="Proteomes" id="UP000002311">
    <property type="component" value="Chromosome XIII"/>
</dbReference>
<dbReference type="RNAct" id="Q03713">
    <property type="molecule type" value="protein"/>
</dbReference>
<dbReference type="GO" id="GO:0005743">
    <property type="term" value="C:mitochondrial inner membrane"/>
    <property type="evidence" value="ECO:0000314"/>
    <property type="project" value="SGD"/>
</dbReference>
<dbReference type="GO" id="GO:0005739">
    <property type="term" value="C:mitochondrion"/>
    <property type="evidence" value="ECO:0000314"/>
    <property type="project" value="SGD"/>
</dbReference>
<dbReference type="GO" id="GO:0098803">
    <property type="term" value="C:respiratory chain complex"/>
    <property type="evidence" value="ECO:0000314"/>
    <property type="project" value="SGD"/>
</dbReference>
<dbReference type="GO" id="GO:0033617">
    <property type="term" value="P:mitochondrial cytochrome c oxidase assembly"/>
    <property type="evidence" value="ECO:0000315"/>
    <property type="project" value="SGD"/>
</dbReference>
<dbReference type="GO" id="GO:0097250">
    <property type="term" value="P:mitochondrial respirasome assembly"/>
    <property type="evidence" value="ECO:0000315"/>
    <property type="project" value="CACAO"/>
</dbReference>
<dbReference type="GO" id="GO:0010155">
    <property type="term" value="P:regulation of proton transport"/>
    <property type="evidence" value="ECO:0000315"/>
    <property type="project" value="SGD"/>
</dbReference>
<dbReference type="Gene3D" id="6.10.140.1320">
    <property type="match status" value="1"/>
</dbReference>
<dbReference type="InterPro" id="IPR007667">
    <property type="entry name" value="Hypoxia_induced_domain"/>
</dbReference>
<dbReference type="InterPro" id="IPR050355">
    <property type="entry name" value="RCF1"/>
</dbReference>
<dbReference type="PANTHER" id="PTHR12297:SF3">
    <property type="entry name" value="HIG1 DOMAIN FAMILY MEMBER 1A"/>
    <property type="match status" value="1"/>
</dbReference>
<dbReference type="PANTHER" id="PTHR12297">
    <property type="entry name" value="HYPOXIA-INDUCBILE GENE 1 HIG1 -RELATED"/>
    <property type="match status" value="1"/>
</dbReference>
<dbReference type="Pfam" id="PF04588">
    <property type="entry name" value="HIG_1_N"/>
    <property type="match status" value="1"/>
</dbReference>
<dbReference type="PROSITE" id="PS51503">
    <property type="entry name" value="HIG1"/>
    <property type="match status" value="1"/>
</dbReference>
<name>RCF1_YEAST</name>
<organism>
    <name type="scientific">Saccharomyces cerevisiae (strain ATCC 204508 / S288c)</name>
    <name type="common">Baker's yeast</name>
    <dbReference type="NCBI Taxonomy" id="559292"/>
    <lineage>
        <taxon>Eukaryota</taxon>
        <taxon>Fungi</taxon>
        <taxon>Dikarya</taxon>
        <taxon>Ascomycota</taxon>
        <taxon>Saccharomycotina</taxon>
        <taxon>Saccharomycetes</taxon>
        <taxon>Saccharomycetales</taxon>
        <taxon>Saccharomycetaceae</taxon>
        <taxon>Saccharomyces</taxon>
    </lineage>
</organism>
<protein>
    <recommendedName>
        <fullName>Respiratory supercomplex factor 1, mitochondrial</fullName>
    </recommendedName>
    <alternativeName>
        <fullName>Altered inheritance of mitochondria protein 31</fullName>
    </alternativeName>
</protein>
<gene>
    <name type="primary">RCF1</name>
    <name type="synonym">AIM31</name>
    <name type="ordered locus">YML030W</name>
</gene>
<keyword id="KW-0002">3D-structure</keyword>
<keyword id="KW-0175">Coiled coil</keyword>
<keyword id="KW-0472">Membrane</keyword>
<keyword id="KW-0496">Mitochondrion</keyword>
<keyword id="KW-1185">Reference proteome</keyword>
<keyword id="KW-0812">Transmembrane</keyword>
<keyword id="KW-1133">Transmembrane helix</keyword>
<accession>Q03713</accession>
<accession>D6VZE4</accession>
<proteinExistence type="evidence at protein level"/>
<feature type="chain" id="PRO_0000215779" description="Respiratory supercomplex factor 1, mitochondrial">
    <location>
        <begin position="1"/>
        <end position="159"/>
    </location>
</feature>
<feature type="topological domain" description="Mitochondrial intermembrane" evidence="15">
    <location>
        <begin position="1"/>
        <end position="13"/>
    </location>
</feature>
<feature type="transmembrane region" description="Helical; Name=1" evidence="11">
    <location>
        <begin position="14"/>
        <end position="30"/>
    </location>
</feature>
<feature type="topological domain" description="Mitochondrial matrix" evidence="15">
    <location>
        <begin position="31"/>
        <end position="35"/>
    </location>
</feature>
<feature type="transmembrane region" description="Helical; Name=2" evidence="11">
    <location>
        <begin position="36"/>
        <end position="57"/>
    </location>
</feature>
<feature type="topological domain" description="Mitochondrial intermembrane" evidence="15">
    <location>
        <begin position="58"/>
        <end position="63"/>
    </location>
</feature>
<feature type="transmembrane region" description="Helical; Name=3" evidence="11">
    <location>
        <begin position="64"/>
        <end position="85"/>
    </location>
</feature>
<feature type="topological domain" description="Mitochondrial matrix" evidence="15">
    <location>
        <begin position="86"/>
        <end position="88"/>
    </location>
</feature>
<feature type="transmembrane region" description="Helical; Name=4" evidence="11">
    <location>
        <begin position="89"/>
        <end position="106"/>
    </location>
</feature>
<feature type="topological domain" description="Mitochondrial intermembrane" evidence="15">
    <location>
        <begin position="107"/>
        <end position="133"/>
    </location>
</feature>
<feature type="transmembrane region" description="Helical; Name=5" evidence="11">
    <location>
        <begin position="134"/>
        <end position="156"/>
    </location>
</feature>
<feature type="topological domain" description="Mitochondrial matrix" evidence="15">
    <location>
        <begin position="157"/>
        <end position="159"/>
    </location>
</feature>
<feature type="domain" description="HIG1" evidence="2">
    <location>
        <begin position="5"/>
        <end position="96"/>
    </location>
</feature>
<feature type="coiled-coil region" evidence="1">
    <location>
        <begin position="88"/>
        <end position="159"/>
    </location>
</feature>
<feature type="helix" evidence="16">
    <location>
        <begin position="14"/>
        <end position="23"/>
    </location>
</feature>
<feature type="helix" evidence="16">
    <location>
        <begin position="25"/>
        <end position="29"/>
    </location>
</feature>
<feature type="helix" evidence="16">
    <location>
        <begin position="34"/>
        <end position="57"/>
    </location>
</feature>
<feature type="helix" evidence="16">
    <location>
        <begin position="65"/>
        <end position="85"/>
    </location>
</feature>
<feature type="helix" evidence="16">
    <location>
        <begin position="89"/>
        <end position="106"/>
    </location>
</feature>
<feature type="strand" evidence="16">
    <location>
        <begin position="109"/>
        <end position="111"/>
    </location>
</feature>
<feature type="helix" evidence="16">
    <location>
        <begin position="117"/>
        <end position="129"/>
    </location>
</feature>
<feature type="helix" evidence="16">
    <location>
        <begin position="134"/>
        <end position="139"/>
    </location>
</feature>
<feature type="helix" evidence="16">
    <location>
        <begin position="141"/>
        <end position="156"/>
    </location>
</feature>
<reference key="1">
    <citation type="journal article" date="1997" name="Nature">
        <title>The nucleotide sequence of Saccharomyces cerevisiae chromosome XIII.</title>
        <authorList>
            <person name="Bowman S."/>
            <person name="Churcher C.M."/>
            <person name="Badcock K."/>
            <person name="Brown D."/>
            <person name="Chillingworth T."/>
            <person name="Connor R."/>
            <person name="Dedman K."/>
            <person name="Devlin K."/>
            <person name="Gentles S."/>
            <person name="Hamlin N."/>
            <person name="Hunt S."/>
            <person name="Jagels K."/>
            <person name="Lye G."/>
            <person name="Moule S."/>
            <person name="Odell C."/>
            <person name="Pearson D."/>
            <person name="Rajandream M.A."/>
            <person name="Rice P."/>
            <person name="Skelton J."/>
            <person name="Walsh S.V."/>
            <person name="Whitehead S."/>
            <person name="Barrell B.G."/>
        </authorList>
    </citation>
    <scope>NUCLEOTIDE SEQUENCE [LARGE SCALE GENOMIC DNA]</scope>
    <source>
        <strain>ATCC 204508 / S288c</strain>
    </source>
</reference>
<reference key="2">
    <citation type="journal article" date="2014" name="G3 (Bethesda)">
        <title>The reference genome sequence of Saccharomyces cerevisiae: Then and now.</title>
        <authorList>
            <person name="Engel S.R."/>
            <person name="Dietrich F.S."/>
            <person name="Fisk D.G."/>
            <person name="Binkley G."/>
            <person name="Balakrishnan R."/>
            <person name="Costanzo M.C."/>
            <person name="Dwight S.S."/>
            <person name="Hitz B.C."/>
            <person name="Karra K."/>
            <person name="Nash R.S."/>
            <person name="Weng S."/>
            <person name="Wong E.D."/>
            <person name="Lloyd P."/>
            <person name="Skrzypek M.S."/>
            <person name="Miyasato S.R."/>
            <person name="Simison M."/>
            <person name="Cherry J.M."/>
        </authorList>
    </citation>
    <scope>GENOME REANNOTATION</scope>
    <source>
        <strain>ATCC 204508 / S288c</strain>
    </source>
</reference>
<reference key="3">
    <citation type="journal article" date="2007" name="Genome Res.">
        <title>Approaching a complete repository of sequence-verified protein-encoding clones for Saccharomyces cerevisiae.</title>
        <authorList>
            <person name="Hu Y."/>
            <person name="Rolfs A."/>
            <person name="Bhullar B."/>
            <person name="Murthy T.V.S."/>
            <person name="Zhu C."/>
            <person name="Berger M.F."/>
            <person name="Camargo A.A."/>
            <person name="Kelley F."/>
            <person name="McCarron S."/>
            <person name="Jepson D."/>
            <person name="Richardson A."/>
            <person name="Raphael J."/>
            <person name="Moreira D."/>
            <person name="Taycher E."/>
            <person name="Zuo D."/>
            <person name="Mohr S."/>
            <person name="Kane M.F."/>
            <person name="Williamson J."/>
            <person name="Simpson A.J.G."/>
            <person name="Bulyk M.L."/>
            <person name="Harlow E."/>
            <person name="Marsischky G."/>
            <person name="Kolodner R.D."/>
            <person name="LaBaer J."/>
        </authorList>
    </citation>
    <scope>NUCLEOTIDE SEQUENCE [GENOMIC DNA]</scope>
    <source>
        <strain>ATCC 204508 / S288c</strain>
    </source>
</reference>
<reference key="4">
    <citation type="journal article" date="2003" name="Nature">
        <title>Global analysis of protein localization in budding yeast.</title>
        <authorList>
            <person name="Huh W.-K."/>
            <person name="Falvo J.V."/>
            <person name="Gerke L.C."/>
            <person name="Carroll A.S."/>
            <person name="Howson R.W."/>
            <person name="Weissman J.S."/>
            <person name="O'Shea E.K."/>
        </authorList>
    </citation>
    <scope>SUBCELLULAR LOCATION [LARGE SCALE ANALYSIS]</scope>
</reference>
<reference key="5">
    <citation type="journal article" date="2003" name="Nature">
        <title>Global analysis of protein expression in yeast.</title>
        <authorList>
            <person name="Ghaemmaghami S."/>
            <person name="Huh W.-K."/>
            <person name="Bower K."/>
            <person name="Howson R.W."/>
            <person name="Belle A."/>
            <person name="Dephoure N."/>
            <person name="O'Shea E.K."/>
            <person name="Weissman J.S."/>
        </authorList>
    </citation>
    <scope>LEVEL OF PROTEIN EXPRESSION [LARGE SCALE ANALYSIS]</scope>
</reference>
<reference key="6">
    <citation type="journal article" date="2003" name="Proc. Natl. Acad. Sci. U.S.A.">
        <title>The proteome of Saccharomyces cerevisiae mitochondria.</title>
        <authorList>
            <person name="Sickmann A."/>
            <person name="Reinders J."/>
            <person name="Wagner Y."/>
            <person name="Joppich C."/>
            <person name="Zahedi R.P."/>
            <person name="Meyer H.E."/>
            <person name="Schoenfisch B."/>
            <person name="Perschil I."/>
            <person name="Chacinska A."/>
            <person name="Guiard B."/>
            <person name="Rehling P."/>
            <person name="Pfanner N."/>
            <person name="Meisinger C."/>
        </authorList>
    </citation>
    <scope>SUBCELLULAR LOCATION [LARGE SCALE ANALYSIS]</scope>
    <source>
        <strain>ATCC 76625 / YPH499</strain>
    </source>
</reference>
<reference key="7">
    <citation type="journal article" date="2009" name="PLoS Genet.">
        <title>Computationally driven, quantitative experiments discover genes required for mitochondrial biogenesis.</title>
        <authorList>
            <person name="Hess D.C."/>
            <person name="Myers C.L."/>
            <person name="Huttenhower C."/>
            <person name="Hibbs M.A."/>
            <person name="Hayes A.P."/>
            <person name="Paw J."/>
            <person name="Clore J.J."/>
            <person name="Mendoza R.M."/>
            <person name="Luis B.S."/>
            <person name="Nislow C."/>
            <person name="Giaever G."/>
            <person name="Costanzo M."/>
            <person name="Troyanskaya O.G."/>
            <person name="Caudy A.A."/>
        </authorList>
    </citation>
    <scope>DISRUPTION PHENOTYPE</scope>
</reference>
<reference key="8">
    <citation type="journal article" date="2009" name="Proteomics">
        <title>A three-way proteomics strategy allows differential analysis of yeast mitochondrial membrane protein complexes under anaerobic and aerobic conditions.</title>
        <authorList>
            <person name="Helbig A.O."/>
            <person name="de Groot M.J."/>
            <person name="van Gestel R.A."/>
            <person name="Mohammed S."/>
            <person name="de Hulster E.A."/>
            <person name="Luttik M.A."/>
            <person name="Daran-Lapujade P."/>
            <person name="Pronk J.T."/>
            <person name="Heck A.J."/>
            <person name="Slijper M."/>
        </authorList>
    </citation>
    <scope>ASSOCIATION WITH THE RESPIRATORY CHAIN COMPLEX IV</scope>
</reference>
<reference key="9">
    <citation type="journal article" date="2012" name="Cell Metab.">
        <title>Rcf1 mediates cytochrome oxidase assembly and respirasome formation, revealing heterogeneity of the enzyme complex.</title>
        <authorList>
            <person name="Vukotic M."/>
            <person name="Oeljeklaus S."/>
            <person name="Wiese S."/>
            <person name="Vogtle F.N."/>
            <person name="Meisinger C."/>
            <person name="Meyer H.E."/>
            <person name="Zieseniss A."/>
            <person name="Katschinski D.M."/>
            <person name="Jans D.C."/>
            <person name="Jakobs S."/>
            <person name="Warscheid B."/>
            <person name="Rehling P."/>
            <person name="Deckers M."/>
        </authorList>
    </citation>
    <scope>FUNCTION</scope>
    <scope>DISRUPTION PHENOTYPE</scope>
    <scope>ASSOCIATION WITH THE RESPIRATORY CHAIN COMPLEX III/COMPLEX IV SUPERCOMPLEX</scope>
</reference>
<reference key="10">
    <citation type="journal article" date="2012" name="Cell Metab.">
        <title>Identification of a protein mediating respiratory supercomplex stability.</title>
        <authorList>
            <person name="Chen Y.C."/>
            <person name="Taylor E.B."/>
            <person name="Dephoure N."/>
            <person name="Heo J.M."/>
            <person name="Tonhato A."/>
            <person name="Papandreou I."/>
            <person name="Nath N."/>
            <person name="Denko N.C."/>
            <person name="Gygi S.P."/>
            <person name="Rutter J."/>
        </authorList>
    </citation>
    <scope>FUNCTION</scope>
    <scope>ASSOCIATION WITH THE RESPIRATORY CHAIN COMPLEX III/COMPLEX IV SUPERCOMPLEX</scope>
</reference>
<reference key="11">
    <citation type="journal article" date="2012" name="Mol. Cell. Biol.">
        <title>Rcf1 and Rcf2, members of the hypoxia-induced gene 1 protein family, are critical components of the mitochondrial cytochrome bc1-cytochrome c oxidase supercomplex.</title>
        <authorList>
            <person name="Strogolova V."/>
            <person name="Furness A."/>
            <person name="Robb-McGrath M."/>
            <person name="Garlich J."/>
            <person name="Stuart R.A."/>
        </authorList>
    </citation>
    <scope>FUNCTION</scope>
    <scope>INTERACTION WITH COX3</scope>
    <scope>ASSOCIATION WITH THE RESPIRATORY CHAIN COMPLEX III/COMPLEX IV SUPERCOMPLEX</scope>
</reference>
<reference key="12">
    <citation type="journal article" date="2019" name="J. Biol. Chem.">
        <title>The yeast mitochondrial proteins Rcf1 and Rcf2 support the enzymology of the cytochrome c oxidase complex and generation of the proton motive force.</title>
        <authorList>
            <person name="Strogolova V."/>
            <person name="Hoang N.H."/>
            <person name="Hosler J."/>
            <person name="Stuart R.A."/>
        </authorList>
    </citation>
    <scope>FUNCTION</scope>
</reference>
<reference key="13">
    <citation type="journal article" date="2019" name="J. Biol. Chem.">
        <title>Hypoxia-inducible gene domain 1 proteins in yeast mitochondria protect against proton leak through complex IV.</title>
        <authorList>
            <person name="Hoang N.H."/>
            <person name="Strogolova V."/>
            <person name="Mosley J.J."/>
            <person name="Stuart R.A."/>
            <person name="Hosler J."/>
        </authorList>
    </citation>
    <scope>FUNCTION</scope>
</reference>
<reference key="14">
    <citation type="journal article" date="2019" name="Nat. Struct. Mol. Biol.">
        <title>Structure of yeast cytochrome c oxidase in a supercomplex with cytochrome bc1.</title>
        <authorList>
            <person name="Hartley A.M."/>
            <person name="Lukoyanova N."/>
            <person name="Zhang Y."/>
            <person name="Cabrera-Orefice A."/>
            <person name="Arnold S."/>
            <person name="Meunier B."/>
            <person name="Pinotsis N."/>
            <person name="Marechal A."/>
        </authorList>
    </citation>
    <scope>IDENTIFICATION BY MASS SPECTROMETRY</scope>
</reference>
<reference key="15">
    <citation type="journal article" date="2018" name="Proc. Natl. Acad. Sci. U.S.A.">
        <title>Solution NMR structure of yeast Rcf1, a protein involved in respiratory supercomplex formation.</title>
        <authorList>
            <person name="Zhou S."/>
            <person name="Pettersson P."/>
            <person name="Huang J."/>
            <person name="Sjoeholm J."/>
            <person name="Sjoestrand D."/>
            <person name="Pomes R."/>
            <person name="Hoegbom M."/>
            <person name="Brzezinski P."/>
            <person name="Maeler L."/>
            <person name="Aedelroth P."/>
        </authorList>
    </citation>
    <scope>STRUCTURE BY NMR</scope>
    <scope>TOPOLOGY</scope>
</reference>
<sequence>MSRMPSSFDVTERDLDDMTFGERIIYHCKKQPLVPIGCLLTTGAVILAAQNVRLGNKWKAQYYFRWRVGLQAATLVALVAGSFIYGTSGKELKAKEEQLKEKAKMREKLWIQELERREEETEARRKRAELARMKTLENEEEIKNLEKELSDLENKLGKK</sequence>